<comment type="function">
    <text evidence="4">Transcriptional activator of a number of genes encoding proteasomal subunits. Binds to the DNA sequence 5'-GAAGGCAAAA-3', enriched in regions upstream of proteasome genes.</text>
</comment>
<comment type="subcellular location">
    <subcellularLocation>
        <location evidence="1">Nucleus</location>
    </subcellularLocation>
</comment>
<comment type="induction">
    <text evidence="5 6 7">Expression is induced by HAP43, by osmotic stress, by oxidative stress, by heavy metal stress, and during biofilm formation.</text>
</comment>
<accession>Q59VM4</accession>
<accession>A0A1D8PD90</accession>
<keyword id="KW-0010">Activator</keyword>
<keyword id="KW-0238">DNA-binding</keyword>
<keyword id="KW-0479">Metal-binding</keyword>
<keyword id="KW-0539">Nucleus</keyword>
<keyword id="KW-1185">Reference proteome</keyword>
<keyword id="KW-0346">Stress response</keyword>
<keyword id="KW-0804">Transcription</keyword>
<keyword id="KW-0805">Transcription regulation</keyword>
<keyword id="KW-0862">Zinc</keyword>
<keyword id="KW-0863">Zinc-finger</keyword>
<evidence type="ECO:0000250" key="1"/>
<evidence type="ECO:0000255" key="2">
    <source>
        <dbReference type="PROSITE-ProRule" id="PRU00042"/>
    </source>
</evidence>
<evidence type="ECO:0000256" key="3">
    <source>
        <dbReference type="SAM" id="MobiDB-lite"/>
    </source>
</evidence>
<evidence type="ECO:0000269" key="4">
    <source>
    </source>
</evidence>
<evidence type="ECO:0000269" key="5">
    <source>
    </source>
</evidence>
<evidence type="ECO:0000269" key="6">
    <source>
    </source>
</evidence>
<evidence type="ECO:0000269" key="7">
    <source>
    </source>
</evidence>
<protein>
    <recommendedName>
        <fullName>Transcriptional regulator RPN4</fullName>
    </recommendedName>
</protein>
<sequence>MTSLAILPQLKRTITDIMDEELYQSPSSPNSMTSFPSGTGNLMSNTNHNTFNQSNNTPFNMNYNHISNRNSINSSPNLSATTFNNANNLGNVLNIPDSFLEQLASQDYIDHLKSQQQQEQAFENPDDIYVQDVHENQVNPFNDYGNPDSFIRAQEQQSQLPQPQQPISQQDKQRPQSQQQQATKAPLPQAFPTRRRRKITLLNDIGGSSTRKKHFDEDYLLYNPDISPGHIVTDCSLDSSLVIPPNSNELFLTESESPEFANDIIPGYENDYLFLDDDDEQIEEDVSDDEGDNYFQVDEDFDDYLMNNNGYDGYPTFNNYESSGNNTDIINNNNNIVDETISDANSNSELEVVFDQPKEVSPSAISPASPDSDDMMIDVEDETEIADATAAKEEINKKHSKSGKKESKSQKENQLTTTTKSKKHSHGISGAEITLNNPNHQCNLINPSTGEPCNKQFSRPYDLIRHQDTIHASMKKIFRCVICEGRLNGGPGNGKEKTFSRGDALSRHIKIKHGLVGQDALDLINEAKENVEYIPV</sequence>
<proteinExistence type="evidence at protein level"/>
<feature type="chain" id="PRO_0000426064" description="Transcriptional regulator RPN4">
    <location>
        <begin position="1"/>
        <end position="536"/>
    </location>
</feature>
<feature type="zinc finger region" description="C2H2-type" evidence="2">
    <location>
        <begin position="440"/>
        <end position="471"/>
    </location>
</feature>
<feature type="region of interest" description="Disordered" evidence="3">
    <location>
        <begin position="154"/>
        <end position="196"/>
    </location>
</feature>
<feature type="region of interest" description="Disordered" evidence="3">
    <location>
        <begin position="353"/>
        <end position="375"/>
    </location>
</feature>
<feature type="region of interest" description="Disordered" evidence="3">
    <location>
        <begin position="393"/>
        <end position="434"/>
    </location>
</feature>
<feature type="compositionally biased region" description="Low complexity" evidence="3">
    <location>
        <begin position="154"/>
        <end position="181"/>
    </location>
</feature>
<feature type="compositionally biased region" description="Low complexity" evidence="3">
    <location>
        <begin position="361"/>
        <end position="370"/>
    </location>
</feature>
<feature type="compositionally biased region" description="Basic and acidic residues" evidence="3">
    <location>
        <begin position="393"/>
        <end position="411"/>
    </location>
</feature>
<organism>
    <name type="scientific">Candida albicans (strain SC5314 / ATCC MYA-2876)</name>
    <name type="common">Yeast</name>
    <dbReference type="NCBI Taxonomy" id="237561"/>
    <lineage>
        <taxon>Eukaryota</taxon>
        <taxon>Fungi</taxon>
        <taxon>Dikarya</taxon>
        <taxon>Ascomycota</taxon>
        <taxon>Saccharomycotina</taxon>
        <taxon>Pichiomycetes</taxon>
        <taxon>Debaryomycetaceae</taxon>
        <taxon>Candida/Lodderomyces clade</taxon>
        <taxon>Candida</taxon>
    </lineage>
</organism>
<reference key="1">
    <citation type="journal article" date="2004" name="Proc. Natl. Acad. Sci. U.S.A.">
        <title>The diploid genome sequence of Candida albicans.</title>
        <authorList>
            <person name="Jones T."/>
            <person name="Federspiel N.A."/>
            <person name="Chibana H."/>
            <person name="Dungan J."/>
            <person name="Kalman S."/>
            <person name="Magee B.B."/>
            <person name="Newport G."/>
            <person name="Thorstenson Y.R."/>
            <person name="Agabian N."/>
            <person name="Magee P.T."/>
            <person name="Davis R.W."/>
            <person name="Scherer S."/>
        </authorList>
    </citation>
    <scope>NUCLEOTIDE SEQUENCE [LARGE SCALE GENOMIC DNA]</scope>
    <source>
        <strain>SC5314 / ATCC MYA-2876</strain>
    </source>
</reference>
<reference key="2">
    <citation type="journal article" date="2007" name="Genome Biol.">
        <title>Assembly of the Candida albicans genome into sixteen supercontigs aligned on the eight chromosomes.</title>
        <authorList>
            <person name="van het Hoog M."/>
            <person name="Rast T.J."/>
            <person name="Martchenko M."/>
            <person name="Grindle S."/>
            <person name="Dignard D."/>
            <person name="Hogues H."/>
            <person name="Cuomo C."/>
            <person name="Berriman M."/>
            <person name="Scherer S."/>
            <person name="Magee B.B."/>
            <person name="Whiteway M."/>
            <person name="Chibana H."/>
            <person name="Nantel A."/>
            <person name="Magee P.T."/>
        </authorList>
    </citation>
    <scope>GENOME REANNOTATION</scope>
    <source>
        <strain>SC5314 / ATCC MYA-2876</strain>
    </source>
</reference>
<reference key="3">
    <citation type="journal article" date="2013" name="Genome Biol.">
        <title>Assembly of a phased diploid Candida albicans genome facilitates allele-specific measurements and provides a simple model for repeat and indel structure.</title>
        <authorList>
            <person name="Muzzey D."/>
            <person name="Schwartz K."/>
            <person name="Weissman J.S."/>
            <person name="Sherlock G."/>
        </authorList>
    </citation>
    <scope>NUCLEOTIDE SEQUENCE [LARGE SCALE GENOMIC DNA]</scope>
    <scope>GENOME REANNOTATION</scope>
    <source>
        <strain>SC5314 / ATCC MYA-2876</strain>
    </source>
</reference>
<reference key="4">
    <citation type="journal article" date="2004" name="PLoS Biol.">
        <title>Conservation and evolution of cis-regulatory systems in ascomycete fungi.</title>
        <authorList>
            <person name="Gasch A.P."/>
            <person name="Moses A.M."/>
            <person name="Chiang D.Y."/>
            <person name="Fraser H.B."/>
            <person name="Berardini M."/>
            <person name="Eisen M.B."/>
        </authorList>
    </citation>
    <scope>FUNCTION</scope>
    <scope>DNA-BINDING</scope>
</reference>
<reference key="5">
    <citation type="journal article" date="2006" name="Mol. Biol. Cell">
        <title>Role of the Hog1 stress-activated protein kinase in the global transcriptional response to stress in the fungal pathogen Candida albicans.</title>
        <authorList>
            <person name="Enjalbert B."/>
            <person name="Smith D.A."/>
            <person name="Cornell M.J."/>
            <person name="Alam I."/>
            <person name="Nicholls S."/>
            <person name="Brown A.J.P."/>
            <person name="Quinn J."/>
        </authorList>
    </citation>
    <scope>INDUCTION</scope>
</reference>
<reference key="6">
    <citation type="journal article" date="2011" name="J. Biol. Chem.">
        <title>Cap2-HAP complex is a critical transcriptional regulator that has dual but contrasting roles in regulation of iron homeostasis in Candida albicans.</title>
        <authorList>
            <person name="Singh R.P."/>
            <person name="Prasad H.K."/>
            <person name="Sinha I."/>
            <person name="Agarwal N."/>
            <person name="Natarajan K."/>
        </authorList>
    </citation>
    <scope>INDUCTION</scope>
</reference>
<reference key="7">
    <citation type="journal article" date="2012" name="Cell">
        <title>A recently evolved transcriptional network controls biofilm development in Candida albicans.</title>
        <authorList>
            <person name="Nobile C.J."/>
            <person name="Fox E.P."/>
            <person name="Nett J.E."/>
            <person name="Sorrells T.R."/>
            <person name="Mitrovich Q.M."/>
            <person name="Hernday A.D."/>
            <person name="Tuch B.B."/>
            <person name="Andes D.R."/>
            <person name="Johnson A.D."/>
        </authorList>
    </citation>
    <scope>INDUCTION</scope>
</reference>
<name>RPN4_CANAL</name>
<dbReference type="EMBL" id="CP017623">
    <property type="protein sequence ID" value="AOW26107.1"/>
    <property type="molecule type" value="Genomic_DNA"/>
</dbReference>
<dbReference type="RefSeq" id="XP_713673.1">
    <property type="nucleotide sequence ID" value="XM_708580.2"/>
</dbReference>
<dbReference type="FunCoup" id="Q59VM4">
    <property type="interactions" value="3521"/>
</dbReference>
<dbReference type="STRING" id="237561.Q59VM4"/>
<dbReference type="EnsemblFungi" id="C1_04330W_A-T">
    <property type="protein sequence ID" value="C1_04330W_A-T-p1"/>
    <property type="gene ID" value="C1_04330W_A"/>
</dbReference>
<dbReference type="GeneID" id="3644684"/>
<dbReference type="KEGG" id="cal:CAALFM_C104330WA"/>
<dbReference type="CGD" id="CAL0000195107">
    <property type="gene designation" value="RPN4"/>
</dbReference>
<dbReference type="VEuPathDB" id="FungiDB:C1_04330W_A"/>
<dbReference type="eggNOG" id="ENOG502RBAK">
    <property type="taxonomic scope" value="Eukaryota"/>
</dbReference>
<dbReference type="HOGENOM" id="CLU_024993_0_0_1"/>
<dbReference type="InParanoid" id="Q59VM4"/>
<dbReference type="OMA" id="ICEGRAN"/>
<dbReference type="OrthoDB" id="7295497at2759"/>
<dbReference type="Proteomes" id="UP000000559">
    <property type="component" value="Chromosome 1"/>
</dbReference>
<dbReference type="GO" id="GO:0005634">
    <property type="term" value="C:nucleus"/>
    <property type="evidence" value="ECO:0007669"/>
    <property type="project" value="UniProtKB-SubCell"/>
</dbReference>
<dbReference type="GO" id="GO:0001228">
    <property type="term" value="F:DNA-binding transcription activator activity, RNA polymerase II-specific"/>
    <property type="evidence" value="ECO:0000315"/>
    <property type="project" value="CGD"/>
</dbReference>
<dbReference type="GO" id="GO:0003700">
    <property type="term" value="F:DNA-binding transcription factor activity"/>
    <property type="evidence" value="ECO:0000250"/>
    <property type="project" value="CGD"/>
</dbReference>
<dbReference type="GO" id="GO:0043565">
    <property type="term" value="F:sequence-specific DNA binding"/>
    <property type="evidence" value="ECO:0000314"/>
    <property type="project" value="CGD"/>
</dbReference>
<dbReference type="GO" id="GO:0008270">
    <property type="term" value="F:zinc ion binding"/>
    <property type="evidence" value="ECO:0007669"/>
    <property type="project" value="UniProtKB-KW"/>
</dbReference>
<dbReference type="GO" id="GO:0043161">
    <property type="term" value="P:proteasome-mediated ubiquitin-dependent protein catabolic process"/>
    <property type="evidence" value="ECO:0000315"/>
    <property type="project" value="CGD"/>
</dbReference>
<dbReference type="GO" id="GO:0006357">
    <property type="term" value="P:regulation of transcription by RNA polymerase II"/>
    <property type="evidence" value="ECO:0000250"/>
    <property type="project" value="CGD"/>
</dbReference>
<dbReference type="Gene3D" id="3.30.160.60">
    <property type="entry name" value="Classic Zinc Finger"/>
    <property type="match status" value="1"/>
</dbReference>
<dbReference type="InterPro" id="IPR013087">
    <property type="entry name" value="Znf_C2H2_type"/>
</dbReference>
<dbReference type="PROSITE" id="PS50157">
    <property type="entry name" value="ZINC_FINGER_C2H2_2"/>
    <property type="match status" value="1"/>
</dbReference>
<gene>
    <name type="primary">RPN4</name>
    <name type="ordered locus">CAALFM_C104330WA</name>
    <name type="ORF">CaO19.1069</name>
</gene>